<name>RNB_PROMH</name>
<reference key="1">
    <citation type="journal article" date="2008" name="J. Bacteriol.">
        <title>Complete genome sequence of uropathogenic Proteus mirabilis, a master of both adherence and motility.</title>
        <authorList>
            <person name="Pearson M.M."/>
            <person name="Sebaihia M."/>
            <person name="Churcher C."/>
            <person name="Quail M.A."/>
            <person name="Seshasayee A.S."/>
            <person name="Luscombe N.M."/>
            <person name="Abdellah Z."/>
            <person name="Arrosmith C."/>
            <person name="Atkin B."/>
            <person name="Chillingworth T."/>
            <person name="Hauser H."/>
            <person name="Jagels K."/>
            <person name="Moule S."/>
            <person name="Mungall K."/>
            <person name="Norbertczak H."/>
            <person name="Rabbinowitsch E."/>
            <person name="Walker D."/>
            <person name="Whithead S."/>
            <person name="Thomson N.R."/>
            <person name="Rather P.N."/>
            <person name="Parkhill J."/>
            <person name="Mobley H.L.T."/>
        </authorList>
    </citation>
    <scope>NUCLEOTIDE SEQUENCE [LARGE SCALE GENOMIC DNA]</scope>
    <source>
        <strain>HI4320</strain>
    </source>
</reference>
<evidence type="ECO:0000255" key="1"/>
<evidence type="ECO:0000255" key="2">
    <source>
        <dbReference type="HAMAP-Rule" id="MF_01036"/>
    </source>
</evidence>
<proteinExistence type="inferred from homology"/>
<gene>
    <name evidence="2" type="primary">rnb</name>
    <name type="ordered locus">PMI1311</name>
</gene>
<feature type="chain" id="PRO_1000135872" description="Exoribonuclease 2">
    <location>
        <begin position="1"/>
        <end position="647"/>
    </location>
</feature>
<feature type="domain" description="RNB" evidence="1">
    <location>
        <begin position="192"/>
        <end position="520"/>
    </location>
</feature>
<feature type="domain" description="S1 motif" evidence="2">
    <location>
        <begin position="565"/>
        <end position="647"/>
    </location>
</feature>
<keyword id="KW-0963">Cytoplasm</keyword>
<keyword id="KW-0269">Exonuclease</keyword>
<keyword id="KW-0378">Hydrolase</keyword>
<keyword id="KW-0540">Nuclease</keyword>
<keyword id="KW-1185">Reference proteome</keyword>
<keyword id="KW-0694">RNA-binding</keyword>
<accession>B4EW02</accession>
<sequence>MFQDNPLLAQLKQQLHAQTPRVEGLVKGTDKGFGFLEVDGQKSYFIPPPQMKKVMHGDRIIAAVHTNNDKESAEPEELVEPFLTRFVGRVQKKEGDNRLWIIPDHPLLKDAIPCRPIKSLTHPFADQDWAVAEMRRHPLKGDKHFQAELTDFITDKDDHFAPWWVTLMRHQLERNAPEVDSETLTLHDDLPREDLTALSFVTIDSASTEDMDDALYIRKEENGQLSLYIAIADPTAYIQPNSELDTIAAQRALTNYLPGFNIPMLPRELSDNLCSLRPNEKRPALVCQVGIMEDGALTDEIHFYSAWVESKAKLVYDNISDWLEGEETQWAPENEIVHEQVMLLKEMSEKRHVWREQHALVFKERPDYRFILDDSGNVLDIVAEKRRTANRIVEEAMITANICAAKVLSRNLGFGIYNVHTGFDPLYIDQVSQTLKEHGIETNADELLTLEGFCRLRRELDNQPNQFLDSRIRRFQNFAEIKTEPGPHFGLGLEAYATWTSPIRKYSDILNHRLLKAIISKSAAEKPQDEDCVRIAERRRANRMAERDVGDWLYARFLKPFAGTESTFNAEIIDITRGGIRVRLVENGAIAFIPAPFLHAVRDEIQCSQETGSVIIKGETAYKLNDIIPVRIEDVKLETRNIVARPI</sequence>
<organism>
    <name type="scientific">Proteus mirabilis (strain HI4320)</name>
    <dbReference type="NCBI Taxonomy" id="529507"/>
    <lineage>
        <taxon>Bacteria</taxon>
        <taxon>Pseudomonadati</taxon>
        <taxon>Pseudomonadota</taxon>
        <taxon>Gammaproteobacteria</taxon>
        <taxon>Enterobacterales</taxon>
        <taxon>Morganellaceae</taxon>
        <taxon>Proteus</taxon>
    </lineage>
</organism>
<comment type="function">
    <text evidence="2">Involved in mRNA degradation. Hydrolyzes single-stranded polyribonucleotides processively in the 3' to 5' direction.</text>
</comment>
<comment type="catalytic activity">
    <reaction evidence="2">
        <text>Exonucleolytic cleavage in the 3'- to 5'-direction to yield nucleoside 5'-phosphates.</text>
        <dbReference type="EC" id="3.1.13.1"/>
    </reaction>
</comment>
<comment type="subcellular location">
    <subcellularLocation>
        <location evidence="2">Cytoplasm</location>
    </subcellularLocation>
</comment>
<comment type="similarity">
    <text evidence="2">Belongs to the RNR ribonuclease family. RNase II subfamily.</text>
</comment>
<protein>
    <recommendedName>
        <fullName evidence="2">Exoribonuclease 2</fullName>
        <ecNumber evidence="2">3.1.13.1</ecNumber>
    </recommendedName>
    <alternativeName>
        <fullName evidence="2">Exoribonuclease II</fullName>
        <shortName evidence="2">RNase II</shortName>
        <shortName evidence="2">Ribonuclease II</shortName>
    </alternativeName>
</protein>
<dbReference type="EC" id="3.1.13.1" evidence="2"/>
<dbReference type="EMBL" id="AM942759">
    <property type="protein sequence ID" value="CAR42782.1"/>
    <property type="molecule type" value="Genomic_DNA"/>
</dbReference>
<dbReference type="RefSeq" id="WP_004243027.1">
    <property type="nucleotide sequence ID" value="NC_010554.1"/>
</dbReference>
<dbReference type="SMR" id="B4EW02"/>
<dbReference type="EnsemblBacteria" id="CAR42782">
    <property type="protein sequence ID" value="CAR42782"/>
    <property type="gene ID" value="PMI1311"/>
</dbReference>
<dbReference type="GeneID" id="6801631"/>
<dbReference type="KEGG" id="pmr:PMI1311"/>
<dbReference type="eggNOG" id="COG4776">
    <property type="taxonomic scope" value="Bacteria"/>
</dbReference>
<dbReference type="HOGENOM" id="CLU_002333_7_3_6"/>
<dbReference type="Proteomes" id="UP000008319">
    <property type="component" value="Chromosome"/>
</dbReference>
<dbReference type="GO" id="GO:0005829">
    <property type="term" value="C:cytosol"/>
    <property type="evidence" value="ECO:0007669"/>
    <property type="project" value="TreeGrafter"/>
</dbReference>
<dbReference type="GO" id="GO:0008859">
    <property type="term" value="F:exoribonuclease II activity"/>
    <property type="evidence" value="ECO:0007669"/>
    <property type="project" value="UniProtKB-UniRule"/>
</dbReference>
<dbReference type="GO" id="GO:0003723">
    <property type="term" value="F:RNA binding"/>
    <property type="evidence" value="ECO:0007669"/>
    <property type="project" value="UniProtKB-KW"/>
</dbReference>
<dbReference type="GO" id="GO:0006402">
    <property type="term" value="P:mRNA catabolic process"/>
    <property type="evidence" value="ECO:0007669"/>
    <property type="project" value="UniProtKB-UniRule"/>
</dbReference>
<dbReference type="FunFam" id="2.40.50.140:FF:000079">
    <property type="entry name" value="Exoribonuclease 2"/>
    <property type="match status" value="1"/>
</dbReference>
<dbReference type="Gene3D" id="2.40.50.640">
    <property type="match status" value="1"/>
</dbReference>
<dbReference type="Gene3D" id="2.40.50.140">
    <property type="entry name" value="Nucleic acid-binding proteins"/>
    <property type="match status" value="2"/>
</dbReference>
<dbReference type="HAMAP" id="MF_01036">
    <property type="entry name" value="RNase_II"/>
    <property type="match status" value="1"/>
</dbReference>
<dbReference type="InterPro" id="IPR011129">
    <property type="entry name" value="CSD"/>
</dbReference>
<dbReference type="InterPro" id="IPR012340">
    <property type="entry name" value="NA-bd_OB-fold"/>
</dbReference>
<dbReference type="InterPro" id="IPR013223">
    <property type="entry name" value="RNase_B_OB_dom"/>
</dbReference>
<dbReference type="InterPro" id="IPR011804">
    <property type="entry name" value="RNase_II"/>
</dbReference>
<dbReference type="InterPro" id="IPR001900">
    <property type="entry name" value="RNase_II/R"/>
</dbReference>
<dbReference type="InterPro" id="IPR022966">
    <property type="entry name" value="RNase_II/R_CS"/>
</dbReference>
<dbReference type="InterPro" id="IPR004476">
    <property type="entry name" value="RNase_II/RNase_R"/>
</dbReference>
<dbReference type="InterPro" id="IPR050180">
    <property type="entry name" value="RNR_Ribonuclease"/>
</dbReference>
<dbReference type="InterPro" id="IPR003029">
    <property type="entry name" value="S1_domain"/>
</dbReference>
<dbReference type="NCBIfam" id="TIGR00358">
    <property type="entry name" value="3_prime_RNase"/>
    <property type="match status" value="1"/>
</dbReference>
<dbReference type="NCBIfam" id="NF003455">
    <property type="entry name" value="PRK05054.1"/>
    <property type="match status" value="1"/>
</dbReference>
<dbReference type="NCBIfam" id="TIGR02062">
    <property type="entry name" value="RNase_B"/>
    <property type="match status" value="1"/>
</dbReference>
<dbReference type="PANTHER" id="PTHR23355:SF37">
    <property type="entry name" value="EXORIBONUCLEASE 2"/>
    <property type="match status" value="1"/>
</dbReference>
<dbReference type="PANTHER" id="PTHR23355">
    <property type="entry name" value="RIBONUCLEASE"/>
    <property type="match status" value="1"/>
</dbReference>
<dbReference type="Pfam" id="PF08206">
    <property type="entry name" value="OB_RNB"/>
    <property type="match status" value="1"/>
</dbReference>
<dbReference type="Pfam" id="PF00773">
    <property type="entry name" value="RNB"/>
    <property type="match status" value="1"/>
</dbReference>
<dbReference type="Pfam" id="PF00575">
    <property type="entry name" value="S1"/>
    <property type="match status" value="1"/>
</dbReference>
<dbReference type="SMART" id="SM00357">
    <property type="entry name" value="CSP"/>
    <property type="match status" value="1"/>
</dbReference>
<dbReference type="SMART" id="SM00955">
    <property type="entry name" value="RNB"/>
    <property type="match status" value="1"/>
</dbReference>
<dbReference type="SMART" id="SM00316">
    <property type="entry name" value="S1"/>
    <property type="match status" value="1"/>
</dbReference>
<dbReference type="SUPFAM" id="SSF50249">
    <property type="entry name" value="Nucleic acid-binding proteins"/>
    <property type="match status" value="4"/>
</dbReference>
<dbReference type="PROSITE" id="PS01175">
    <property type="entry name" value="RIBONUCLEASE_II"/>
    <property type="match status" value="1"/>
</dbReference>